<gene>
    <name evidence="1" type="primary">menH</name>
    <name type="ordered locus">STY2538</name>
    <name type="ordered locus">t0555</name>
</gene>
<evidence type="ECO:0000255" key="1">
    <source>
        <dbReference type="HAMAP-Rule" id="MF_01660"/>
    </source>
</evidence>
<evidence type="ECO:0000305" key="2"/>
<name>MENH_SALTI</name>
<protein>
    <recommendedName>
        <fullName evidence="1">2-succinyl-6-hydroxy-2,4-cyclohexadiene-1-carboxylate synthase</fullName>
        <shortName evidence="1">SHCHC synthase</shortName>
        <ecNumber evidence="1">4.2.99.20</ecNumber>
    </recommendedName>
</protein>
<feature type="chain" id="PRO_0000341921" description="2-succinyl-6-hydroxy-2,4-cyclohexadiene-1-carboxylate synthase">
    <location>
        <begin position="1"/>
        <end position="252"/>
    </location>
</feature>
<feature type="sequence conflict" description="In Ref. 2; AAO68261." evidence="2" ref="2">
    <original>N</original>
    <variation>Y</variation>
    <location>
        <position position="44"/>
    </location>
</feature>
<feature type="sequence conflict" description="In Ref. 2; AAO68261." evidence="2" ref="2">
    <original>D</original>
    <variation>G</variation>
    <location>
        <position position="89"/>
    </location>
</feature>
<feature type="sequence conflict" description="In Ref. 2; AAO68261." evidence="2" ref="2">
    <original>QMIAS</original>
    <variation>AMMAA</variation>
    <location>
        <begin position="92"/>
        <end position="96"/>
    </location>
</feature>
<comment type="function">
    <text evidence="1">Catalyzes a proton abstraction reaction that results in 2,5-elimination of pyruvate from 2-succinyl-5-enolpyruvyl-6-hydroxy-3-cyclohexene-1-carboxylate (SEPHCHC) and the formation of 2-succinyl-6-hydroxy-2,4-cyclohexadiene-1-carboxylate (SHCHC).</text>
</comment>
<comment type="catalytic activity">
    <reaction evidence="1">
        <text>5-enolpyruvoyl-6-hydroxy-2-succinyl-cyclohex-3-ene-1-carboxylate = (1R,6R)-6-hydroxy-2-succinyl-cyclohexa-2,4-diene-1-carboxylate + pyruvate</text>
        <dbReference type="Rhea" id="RHEA:25597"/>
        <dbReference type="ChEBI" id="CHEBI:15361"/>
        <dbReference type="ChEBI" id="CHEBI:58689"/>
        <dbReference type="ChEBI" id="CHEBI:58818"/>
        <dbReference type="EC" id="4.2.99.20"/>
    </reaction>
</comment>
<comment type="pathway">
    <text evidence="1">Quinol/quinone metabolism; 1,4-dihydroxy-2-naphthoate biosynthesis; 1,4-dihydroxy-2-naphthoate from chorismate: step 3/7.</text>
</comment>
<comment type="pathway">
    <text evidence="1">Quinol/quinone metabolism; menaquinone biosynthesis.</text>
</comment>
<comment type="subunit">
    <text evidence="1">Monomer.</text>
</comment>
<comment type="similarity">
    <text evidence="1">Belongs to the AB hydrolase superfamily. MenH family.</text>
</comment>
<keyword id="KW-0456">Lyase</keyword>
<keyword id="KW-0474">Menaquinone biosynthesis</keyword>
<accession>Q8Z534</accession>
<accession>Q83T74</accession>
<reference key="1">
    <citation type="journal article" date="2001" name="Nature">
        <title>Complete genome sequence of a multiple drug resistant Salmonella enterica serovar Typhi CT18.</title>
        <authorList>
            <person name="Parkhill J."/>
            <person name="Dougan G."/>
            <person name="James K.D."/>
            <person name="Thomson N.R."/>
            <person name="Pickard D."/>
            <person name="Wain J."/>
            <person name="Churcher C.M."/>
            <person name="Mungall K.L."/>
            <person name="Bentley S.D."/>
            <person name="Holden M.T.G."/>
            <person name="Sebaihia M."/>
            <person name="Baker S."/>
            <person name="Basham D."/>
            <person name="Brooks K."/>
            <person name="Chillingworth T."/>
            <person name="Connerton P."/>
            <person name="Cronin A."/>
            <person name="Davis P."/>
            <person name="Davies R.M."/>
            <person name="Dowd L."/>
            <person name="White N."/>
            <person name="Farrar J."/>
            <person name="Feltwell T."/>
            <person name="Hamlin N."/>
            <person name="Haque A."/>
            <person name="Hien T.T."/>
            <person name="Holroyd S."/>
            <person name="Jagels K."/>
            <person name="Krogh A."/>
            <person name="Larsen T.S."/>
            <person name="Leather S."/>
            <person name="Moule S."/>
            <person name="O'Gaora P."/>
            <person name="Parry C."/>
            <person name="Quail M.A."/>
            <person name="Rutherford K.M."/>
            <person name="Simmonds M."/>
            <person name="Skelton J."/>
            <person name="Stevens K."/>
            <person name="Whitehead S."/>
            <person name="Barrell B.G."/>
        </authorList>
    </citation>
    <scope>NUCLEOTIDE SEQUENCE [LARGE SCALE GENOMIC DNA]</scope>
    <source>
        <strain>CT18</strain>
    </source>
</reference>
<reference key="2">
    <citation type="journal article" date="2003" name="J. Bacteriol.">
        <title>Comparative genomics of Salmonella enterica serovar Typhi strains Ty2 and CT18.</title>
        <authorList>
            <person name="Deng W."/>
            <person name="Liou S.-R."/>
            <person name="Plunkett G. III"/>
            <person name="Mayhew G.F."/>
            <person name="Rose D.J."/>
            <person name="Burland V."/>
            <person name="Kodoyianni V."/>
            <person name="Schwartz D.C."/>
            <person name="Blattner F.R."/>
        </authorList>
    </citation>
    <scope>NUCLEOTIDE SEQUENCE [LARGE SCALE GENOMIC DNA]</scope>
    <source>
        <strain>ATCC 700931 / Ty2</strain>
    </source>
</reference>
<dbReference type="EC" id="4.2.99.20" evidence="1"/>
<dbReference type="EMBL" id="AL513382">
    <property type="protein sequence ID" value="CAD07541.1"/>
    <property type="molecule type" value="Genomic_DNA"/>
</dbReference>
<dbReference type="EMBL" id="AE014613">
    <property type="protein sequence ID" value="AAO68261.1"/>
    <property type="molecule type" value="Genomic_DNA"/>
</dbReference>
<dbReference type="RefSeq" id="NP_456851.1">
    <property type="nucleotide sequence ID" value="NC_003198.1"/>
</dbReference>
<dbReference type="SMR" id="Q8Z534"/>
<dbReference type="STRING" id="220341.gene:17586438"/>
<dbReference type="ESTHER" id="salty-YFBB">
    <property type="family name" value="MenH_SHCHC"/>
</dbReference>
<dbReference type="KEGG" id="stt:t0555"/>
<dbReference type="KEGG" id="sty:STY2538"/>
<dbReference type="PATRIC" id="fig|220341.7.peg.2569"/>
<dbReference type="eggNOG" id="COG0596">
    <property type="taxonomic scope" value="Bacteria"/>
</dbReference>
<dbReference type="HOGENOM" id="CLU_020336_38_2_6"/>
<dbReference type="OMA" id="LNDWYQQ"/>
<dbReference type="UniPathway" id="UPA00079"/>
<dbReference type="UniPathway" id="UPA01057">
    <property type="reaction ID" value="UER00900"/>
</dbReference>
<dbReference type="Proteomes" id="UP000000541">
    <property type="component" value="Chromosome"/>
</dbReference>
<dbReference type="Proteomes" id="UP000002670">
    <property type="component" value="Chromosome"/>
</dbReference>
<dbReference type="GO" id="GO:0070205">
    <property type="term" value="F:2-succinyl-6-hydroxy-2,4-cyclohexadiene-1-carboxylate synthase activity"/>
    <property type="evidence" value="ECO:0007669"/>
    <property type="project" value="UniProtKB-UniRule"/>
</dbReference>
<dbReference type="GO" id="GO:0009234">
    <property type="term" value="P:menaquinone biosynthetic process"/>
    <property type="evidence" value="ECO:0007669"/>
    <property type="project" value="UniProtKB-UniRule"/>
</dbReference>
<dbReference type="Gene3D" id="3.40.50.1820">
    <property type="entry name" value="alpha/beta hydrolase"/>
    <property type="match status" value="1"/>
</dbReference>
<dbReference type="HAMAP" id="MF_01660">
    <property type="entry name" value="MenH"/>
    <property type="match status" value="1"/>
</dbReference>
<dbReference type="InterPro" id="IPR000073">
    <property type="entry name" value="AB_hydrolase_1"/>
</dbReference>
<dbReference type="InterPro" id="IPR029058">
    <property type="entry name" value="AB_hydrolase_fold"/>
</dbReference>
<dbReference type="InterPro" id="IPR022485">
    <property type="entry name" value="SHCHC_synthase_MenH"/>
</dbReference>
<dbReference type="NCBIfam" id="TIGR03695">
    <property type="entry name" value="menH_SHCHC"/>
    <property type="match status" value="1"/>
</dbReference>
<dbReference type="NCBIfam" id="NF008340">
    <property type="entry name" value="PRK11126.1"/>
    <property type="match status" value="1"/>
</dbReference>
<dbReference type="PANTHER" id="PTHR42916">
    <property type="entry name" value="2-SUCCINYL-5-ENOLPYRUVYL-6-HYDROXY-3-CYCLOHEXENE-1-CARBOXYLATE SYNTHASE"/>
    <property type="match status" value="1"/>
</dbReference>
<dbReference type="PANTHER" id="PTHR42916:SF1">
    <property type="entry name" value="PROTEIN PHYLLO, CHLOROPLASTIC"/>
    <property type="match status" value="1"/>
</dbReference>
<dbReference type="Pfam" id="PF12697">
    <property type="entry name" value="Abhydrolase_6"/>
    <property type="match status" value="1"/>
</dbReference>
<dbReference type="SUPFAM" id="SSF53474">
    <property type="entry name" value="alpha/beta-Hydrolases"/>
    <property type="match status" value="1"/>
</dbReference>
<sequence length="252" mass="27745">MMLHAQHMPGQPGTPSLVFLHGFSGDCREWQPVGEQFHGCSRLNIDLPGHGGSAAIPVGGFADVIRLLRATLISYNILKFWLVGYSLGDRVQMIASCQGIPGLCGLVVEGGHPGLQNEQARAERRLSDGRWAERFRHEPLTEVFHDWYQQPVFASLTAQQRQALTALRSQNNGETLAAMLEATSLAVQPDLREVLNALAFPFYYLCGERDSKFRALAQEVAATCHVIRNAGHNAHRENPAGVVDSLAQILRL</sequence>
<organism>
    <name type="scientific">Salmonella typhi</name>
    <dbReference type="NCBI Taxonomy" id="90370"/>
    <lineage>
        <taxon>Bacteria</taxon>
        <taxon>Pseudomonadati</taxon>
        <taxon>Pseudomonadota</taxon>
        <taxon>Gammaproteobacteria</taxon>
        <taxon>Enterobacterales</taxon>
        <taxon>Enterobacteriaceae</taxon>
        <taxon>Salmonella</taxon>
    </lineage>
</organism>
<proteinExistence type="inferred from homology"/>